<comment type="function">
    <text evidence="1">Binds to the 23S rRNA.</text>
</comment>
<comment type="subunit">
    <text evidence="1">Part of the 50S ribosomal subunit.</text>
</comment>
<comment type="similarity">
    <text evidence="1">Belongs to the universal ribosomal protein uL15 family.</text>
</comment>
<dbReference type="EMBL" id="CP001025">
    <property type="protein sequence ID" value="ACB62796.1"/>
    <property type="molecule type" value="Genomic_DNA"/>
</dbReference>
<dbReference type="RefSeq" id="WP_006482880.1">
    <property type="nucleotide sequence ID" value="NC_010551.1"/>
</dbReference>
<dbReference type="SMR" id="B1YRP8"/>
<dbReference type="GeneID" id="98107141"/>
<dbReference type="KEGG" id="bac:BamMC406_0295"/>
<dbReference type="HOGENOM" id="CLU_055188_4_2_4"/>
<dbReference type="OrthoDB" id="9810293at2"/>
<dbReference type="Proteomes" id="UP000001680">
    <property type="component" value="Chromosome 1"/>
</dbReference>
<dbReference type="GO" id="GO:0022625">
    <property type="term" value="C:cytosolic large ribosomal subunit"/>
    <property type="evidence" value="ECO:0007669"/>
    <property type="project" value="TreeGrafter"/>
</dbReference>
<dbReference type="GO" id="GO:0019843">
    <property type="term" value="F:rRNA binding"/>
    <property type="evidence" value="ECO:0007669"/>
    <property type="project" value="UniProtKB-UniRule"/>
</dbReference>
<dbReference type="GO" id="GO:0003735">
    <property type="term" value="F:structural constituent of ribosome"/>
    <property type="evidence" value="ECO:0007669"/>
    <property type="project" value="InterPro"/>
</dbReference>
<dbReference type="GO" id="GO:0006412">
    <property type="term" value="P:translation"/>
    <property type="evidence" value="ECO:0007669"/>
    <property type="project" value="UniProtKB-UniRule"/>
</dbReference>
<dbReference type="Gene3D" id="3.100.10.10">
    <property type="match status" value="1"/>
</dbReference>
<dbReference type="HAMAP" id="MF_01341">
    <property type="entry name" value="Ribosomal_uL15"/>
    <property type="match status" value="1"/>
</dbReference>
<dbReference type="InterPro" id="IPR030878">
    <property type="entry name" value="Ribosomal_uL15"/>
</dbReference>
<dbReference type="InterPro" id="IPR021131">
    <property type="entry name" value="Ribosomal_uL15/eL18"/>
</dbReference>
<dbReference type="InterPro" id="IPR036227">
    <property type="entry name" value="Ribosomal_uL15/eL18_sf"/>
</dbReference>
<dbReference type="InterPro" id="IPR005749">
    <property type="entry name" value="Ribosomal_uL15_bac-type"/>
</dbReference>
<dbReference type="InterPro" id="IPR001196">
    <property type="entry name" value="Ribosomal_uL15_CS"/>
</dbReference>
<dbReference type="NCBIfam" id="TIGR01071">
    <property type="entry name" value="rplO_bact"/>
    <property type="match status" value="1"/>
</dbReference>
<dbReference type="PANTHER" id="PTHR12934">
    <property type="entry name" value="50S RIBOSOMAL PROTEIN L15"/>
    <property type="match status" value="1"/>
</dbReference>
<dbReference type="PANTHER" id="PTHR12934:SF11">
    <property type="entry name" value="LARGE RIBOSOMAL SUBUNIT PROTEIN UL15M"/>
    <property type="match status" value="1"/>
</dbReference>
<dbReference type="Pfam" id="PF00828">
    <property type="entry name" value="Ribosomal_L27A"/>
    <property type="match status" value="1"/>
</dbReference>
<dbReference type="SUPFAM" id="SSF52080">
    <property type="entry name" value="Ribosomal proteins L15p and L18e"/>
    <property type="match status" value="1"/>
</dbReference>
<dbReference type="PROSITE" id="PS00475">
    <property type="entry name" value="RIBOSOMAL_L15"/>
    <property type="match status" value="1"/>
</dbReference>
<keyword id="KW-0687">Ribonucleoprotein</keyword>
<keyword id="KW-0689">Ribosomal protein</keyword>
<keyword id="KW-0694">RNA-binding</keyword>
<keyword id="KW-0699">rRNA-binding</keyword>
<reference key="1">
    <citation type="submission" date="2008-04" db="EMBL/GenBank/DDBJ databases">
        <title>Complete sequence of chromosome 1 of Burkholderia ambifaria MC40-6.</title>
        <authorList>
            <person name="Copeland A."/>
            <person name="Lucas S."/>
            <person name="Lapidus A."/>
            <person name="Glavina del Rio T."/>
            <person name="Dalin E."/>
            <person name="Tice H."/>
            <person name="Pitluck S."/>
            <person name="Chain P."/>
            <person name="Malfatti S."/>
            <person name="Shin M."/>
            <person name="Vergez L."/>
            <person name="Lang D."/>
            <person name="Schmutz J."/>
            <person name="Larimer F."/>
            <person name="Land M."/>
            <person name="Hauser L."/>
            <person name="Kyrpides N."/>
            <person name="Lykidis A."/>
            <person name="Ramette A."/>
            <person name="Konstantinidis K."/>
            <person name="Tiedje J."/>
            <person name="Richardson P."/>
        </authorList>
    </citation>
    <scope>NUCLEOTIDE SEQUENCE [LARGE SCALE GENOMIC DNA]</scope>
    <source>
        <strain>MC40-6</strain>
    </source>
</reference>
<organism>
    <name type="scientific">Burkholderia ambifaria (strain MC40-6)</name>
    <dbReference type="NCBI Taxonomy" id="398577"/>
    <lineage>
        <taxon>Bacteria</taxon>
        <taxon>Pseudomonadati</taxon>
        <taxon>Pseudomonadota</taxon>
        <taxon>Betaproteobacteria</taxon>
        <taxon>Burkholderiales</taxon>
        <taxon>Burkholderiaceae</taxon>
        <taxon>Burkholderia</taxon>
        <taxon>Burkholderia cepacia complex</taxon>
    </lineage>
</organism>
<accession>B1YRP8</accession>
<gene>
    <name evidence="1" type="primary">rplO</name>
    <name type="ordered locus">BamMC406_0295</name>
</gene>
<proteinExistence type="inferred from homology"/>
<feature type="chain" id="PRO_1000142782" description="Large ribosomal subunit protein uL15">
    <location>
        <begin position="1"/>
        <end position="144"/>
    </location>
</feature>
<feature type="region of interest" description="Disordered" evidence="2">
    <location>
        <begin position="1"/>
        <end position="56"/>
    </location>
</feature>
<feature type="compositionally biased region" description="Gly residues" evidence="2">
    <location>
        <begin position="21"/>
        <end position="31"/>
    </location>
</feature>
<protein>
    <recommendedName>
        <fullName evidence="1">Large ribosomal subunit protein uL15</fullName>
    </recommendedName>
    <alternativeName>
        <fullName evidence="3">50S ribosomal protein L15</fullName>
    </alternativeName>
</protein>
<name>RL15_BURA4</name>
<evidence type="ECO:0000255" key="1">
    <source>
        <dbReference type="HAMAP-Rule" id="MF_01341"/>
    </source>
</evidence>
<evidence type="ECO:0000256" key="2">
    <source>
        <dbReference type="SAM" id="MobiDB-lite"/>
    </source>
</evidence>
<evidence type="ECO:0000305" key="3"/>
<sequence>MELNNLKPAAGAKHAKRRVGRGIGSGLGKTAGRGHKGQKSRSGGFHKVGFEGGQMPLQRRLPKRGFTSLTKEFVGEVRLGDLEKLPVDEIDLLALKQAGLVGELTKSAKIIATGELKRKIVVKGLGATKGARAAIEAAGGSFAE</sequence>